<keyword id="KW-0021">Allosteric enzyme</keyword>
<keyword id="KW-0067">ATP-binding</keyword>
<keyword id="KW-0131">Cell cycle</keyword>
<keyword id="KW-0132">Cell division</keyword>
<keyword id="KW-0966">Cell projection</keyword>
<keyword id="KW-0963">Cytoplasm</keyword>
<keyword id="KW-0206">Cytoskeleton</keyword>
<keyword id="KW-0217">Developmental protein</keyword>
<keyword id="KW-0221">Differentiation</keyword>
<keyword id="KW-0256">Endoplasmic reticulum</keyword>
<keyword id="KW-0413">Isomerase</keyword>
<keyword id="KW-0472">Membrane</keyword>
<keyword id="KW-0493">Microtubule</keyword>
<keyword id="KW-0524">Neurogenesis</keyword>
<keyword id="KW-0547">Nucleotide-binding</keyword>
<keyword id="KW-0539">Nucleus</keyword>
<keyword id="KW-0597">Phosphoprotein</keyword>
<keyword id="KW-1185">Reference proteome</keyword>
<feature type="chain" id="PRO_0000367135" description="Spastin">
    <location>
        <begin position="1"/>
        <end position="581"/>
    </location>
</feature>
<feature type="topological domain" description="Cytoplasmic" evidence="3">
    <location>
        <begin position="1"/>
        <end position="54"/>
    </location>
</feature>
<feature type="intramembrane region" description="Helical" evidence="3">
    <location>
        <begin position="55"/>
        <end position="75"/>
    </location>
</feature>
<feature type="topological domain" description="Cytoplasmic" evidence="3">
    <location>
        <begin position="76"/>
        <end position="581"/>
    </location>
</feature>
<feature type="domain" description="MIT" evidence="2">
    <location>
        <begin position="118"/>
        <end position="192"/>
    </location>
</feature>
<feature type="region of interest" description="Required for interaction with RTN1" evidence="1">
    <location>
        <begin position="1"/>
        <end position="265"/>
    </location>
</feature>
<feature type="region of interest" description="Required for midbody localization" evidence="1">
    <location>
        <begin position="1"/>
        <end position="191"/>
    </location>
</feature>
<feature type="region of interest" description="Required for interaction with ATL1" evidence="1">
    <location>
        <begin position="1"/>
        <end position="78"/>
    </location>
</feature>
<feature type="region of interest" description="Required for nuclear localization" evidence="1">
    <location>
        <begin position="1"/>
        <end position="48"/>
    </location>
</feature>
<feature type="region of interest" description="Disordered" evidence="4">
    <location>
        <begin position="1"/>
        <end position="39"/>
    </location>
</feature>
<feature type="region of interest" description="Required for interaction with SSNA1 and microtubules" evidence="1">
    <location>
        <begin position="48"/>
        <end position="85"/>
    </location>
</feature>
<feature type="region of interest" description="Disordered" evidence="4">
    <location>
        <begin position="90"/>
        <end position="111"/>
    </location>
</feature>
<feature type="region of interest" description="Sufficient for microtubule severing" evidence="1">
    <location>
        <begin position="193"/>
        <end position="581"/>
    </location>
</feature>
<feature type="region of interest" description="Disordered" evidence="4">
    <location>
        <begin position="195"/>
        <end position="277"/>
    </location>
</feature>
<feature type="region of interest" description="Required for interaction with microtubules and microtubule severing" evidence="1">
    <location>
        <begin position="235"/>
        <end position="293"/>
    </location>
</feature>
<feature type="short sequence motif" description="Nuclear localization signal" evidence="3">
    <location>
        <begin position="4"/>
        <end position="11"/>
    </location>
</feature>
<feature type="short sequence motif" description="Nuclear export signal" evidence="3">
    <location>
        <begin position="57"/>
        <end position="65"/>
    </location>
</feature>
<feature type="short sequence motif" description="Nuclear localization signal" evidence="3">
    <location>
        <begin position="274"/>
        <end position="277"/>
    </location>
</feature>
<feature type="compositionally biased region" description="Basic residues" evidence="4">
    <location>
        <begin position="1"/>
        <end position="12"/>
    </location>
</feature>
<feature type="compositionally biased region" description="Pro residues" evidence="4">
    <location>
        <begin position="20"/>
        <end position="39"/>
    </location>
</feature>
<feature type="compositionally biased region" description="Pro residues" evidence="4">
    <location>
        <begin position="97"/>
        <end position="106"/>
    </location>
</feature>
<feature type="compositionally biased region" description="Polar residues" evidence="4">
    <location>
        <begin position="206"/>
        <end position="225"/>
    </location>
</feature>
<feature type="compositionally biased region" description="Polar residues" evidence="4">
    <location>
        <begin position="254"/>
        <end position="271"/>
    </location>
</feature>
<feature type="binding site" evidence="3">
    <location>
        <begin position="347"/>
        <end position="354"/>
    </location>
    <ligand>
        <name>ATP</name>
        <dbReference type="ChEBI" id="CHEBI:30616"/>
    </ligand>
</feature>
<feature type="modified residue" description="Phosphoserine" evidence="6">
    <location>
        <position position="210"/>
    </location>
</feature>
<feature type="modified residue" description="Phosphoserine" evidence="1">
    <location>
        <position position="233"/>
    </location>
</feature>
<feature type="modified residue" description="Phosphothreonine" evidence="1">
    <location>
        <position position="271"/>
    </location>
</feature>
<feature type="modified residue" description="Phosphoserine" evidence="1">
    <location>
        <position position="562"/>
    </location>
</feature>
<protein>
    <recommendedName>
        <fullName evidence="3">Spastin</fullName>
        <ecNumber evidence="3">5.6.1.1</ecNumber>
    </recommendedName>
</protein>
<comment type="function">
    <text evidence="3 5">ATP-dependent microtubule severing protein that specifically recognizes and cuts microtubules that are polyglutamylated. Preferentially recognizes and acts on microtubules decorated with short polyglutamate tails: severing activity increases as the number of glutamates per tubulin rises from one to eight, but decreases beyond this glutamylation threshold. Severing activity is not dependent on tubulin acetylation or detyrosination. Microtubule severing promotes reorganization of cellular microtubule arrays and the release of microtubules from the centrosome following nucleation. It is critical for the biogenesis and maintenance of complex microtubule arrays in axons, spindles and cilia. SPAST is involved in abscission step of cytokinesis and nuclear envelope reassembly during anaphase in cooperation with the ESCRT-III complex. Recruited at the midbody, probably by IST1, and participates in membrane fission during abscission together with the ESCRT-III complex. Recruited to the nuclear membrane by IST1 and mediates microtubule severing, promoting nuclear envelope sealing and mitotic spindle disassembly during late anaphase. Required for membrane traffic from the endoplasmic reticulum (ER) to the Golgi and endosome recycling. Recruited by IST1 to endosomes and regulates early endosomal tubulation and recycling by mediating microtubule severing (By similarity). Probably plays a role in axon growth and the formation of axonal branches (PubMed:18234839).</text>
</comment>
<comment type="catalytic activity">
    <reaction evidence="3">
        <text>n ATP + n H2O + a microtubule = n ADP + n phosphate + (n+1) alpha/beta tubulin heterodimers.</text>
        <dbReference type="EC" id="5.6.1.1"/>
    </reaction>
</comment>
<comment type="activity regulation">
    <text evidence="3">Allosteric enzyme with a cooperative mechanism; at least two neighbor subunits influence each other strongly in spastin hexamers. Microtubule binding promotes cooperative interactions among spastin subunits.</text>
</comment>
<comment type="subunit">
    <text evidence="3">Homohexamer. Mostly monomeric, but assembles into hexameric structure for short periods of time. Oligomerization seems to be a prerequisite for catalytic activity. Binding to ATP in a cleft between two adjacent subunits stabilizes the homohexameric form. Binds to microtubules at least in part via the alpha-tubulin and beta-tubulin tails. The hexamer adopts a ring conformation through which microtubules pass prior to being severed. Does not interact strongly with tubulin heterodimers. Interacts (via MIT domain) with CHMP1B; the interaction is direct. Interacts with SSNA1. Interacts with ATL1. Interacts with RTN1. Interacts with ZFYVE27. Interacts with REEP1. Interacts (via MIT domain) with IST1.</text>
</comment>
<comment type="subcellular location">
    <subcellularLocation>
        <location evidence="3">Membrane</location>
        <topology evidence="3">Peripheral membrane protein</topology>
    </subcellularLocation>
    <subcellularLocation>
        <location evidence="3">Endoplasmic reticulum</location>
    </subcellularLocation>
    <subcellularLocation>
        <location evidence="3">Midbody</location>
    </subcellularLocation>
    <subcellularLocation>
        <location evidence="3">Cytoplasm</location>
        <location evidence="3">Cytoskeleton</location>
        <location evidence="3">Microtubule organizing center</location>
        <location evidence="3">Centrosome</location>
    </subcellularLocation>
    <subcellularLocation>
        <location evidence="3">Cytoplasm</location>
        <location evidence="3">Cytoskeleton</location>
    </subcellularLocation>
    <subcellularLocation>
        <location evidence="3">Cytoplasm</location>
        <location evidence="3">Perinuclear region</location>
    </subcellularLocation>
    <subcellularLocation>
        <location evidence="3">Nucleus</location>
    </subcellularLocation>
    <subcellularLocation>
        <location evidence="3">Cytoplasm</location>
        <location evidence="3">Cytoskeleton</location>
        <location evidence="3">Spindle</location>
    </subcellularLocation>
    <subcellularLocation>
        <location evidence="3">Cytoplasm</location>
    </subcellularLocation>
    <subcellularLocation>
        <location evidence="1">Cell projection</location>
        <location evidence="1">Axon</location>
    </subcellularLocation>
    <text evidence="1 3">Forms an intramembrane hairpin-like structure in the membrane. Localization to the centrosome is independent of microtubules. Localizes to the midbody of dividing cells, and this requires CHMP1B. Enriched in the distal axons and branches of postmitotic neurons. Localizes to endoplasmic reticulum tubular network. Mainly nuclear in interphase cells and becomes associated with the centrosomes, spindle microtubules, midzone and finally the midbody during cell division (By similarity).</text>
</comment>
<comment type="similarity">
    <text evidence="3">Belongs to the AAA ATPase family. Spastin subfamily.</text>
</comment>
<accession>B2RYN7</accession>
<dbReference type="EC" id="5.6.1.1" evidence="3"/>
<dbReference type="EMBL" id="BC166846">
    <property type="protein sequence ID" value="AAI66846.1"/>
    <property type="molecule type" value="mRNA"/>
</dbReference>
<dbReference type="RefSeq" id="NP_001102172.2">
    <property type="nucleotide sequence ID" value="NM_001108702.3"/>
</dbReference>
<dbReference type="SMR" id="B2RYN7"/>
<dbReference type="FunCoup" id="B2RYN7">
    <property type="interactions" value="4056"/>
</dbReference>
<dbReference type="IntAct" id="B2RYN7">
    <property type="interactions" value="1"/>
</dbReference>
<dbReference type="STRING" id="10116.ENSRNOP00000033763"/>
<dbReference type="GlyGen" id="B2RYN7">
    <property type="glycosylation" value="1 site"/>
</dbReference>
<dbReference type="iPTMnet" id="B2RYN7"/>
<dbReference type="PhosphoSitePlus" id="B2RYN7"/>
<dbReference type="PaxDb" id="10116-ENSRNOP00000033763"/>
<dbReference type="PeptideAtlas" id="B2RYN7"/>
<dbReference type="GeneID" id="362700"/>
<dbReference type="KEGG" id="rno:362700"/>
<dbReference type="UCSC" id="RGD:1308494">
    <property type="organism name" value="rat"/>
</dbReference>
<dbReference type="AGR" id="RGD:1308494"/>
<dbReference type="CTD" id="6683"/>
<dbReference type="RGD" id="1308494">
    <property type="gene designation" value="Spast"/>
</dbReference>
<dbReference type="VEuPathDB" id="HostDB:ENSRNOG00000027136"/>
<dbReference type="eggNOG" id="KOG0740">
    <property type="taxonomic scope" value="Eukaryota"/>
</dbReference>
<dbReference type="InParanoid" id="B2RYN7"/>
<dbReference type="Reactome" id="R-RNO-9668328">
    <property type="pathway name" value="Sealing of the nuclear envelope (NE) by ESCRT-III"/>
</dbReference>
<dbReference type="PRO" id="PR:B2RYN7"/>
<dbReference type="Proteomes" id="UP000002494">
    <property type="component" value="Chromosome 6"/>
</dbReference>
<dbReference type="Bgee" id="ENSRNOG00000027136">
    <property type="expression patterns" value="Expressed in testis and 20 other cell types or tissues"/>
</dbReference>
<dbReference type="ExpressionAtlas" id="B2RYN7">
    <property type="expression patterns" value="baseline and differential"/>
</dbReference>
<dbReference type="GO" id="GO:0030424">
    <property type="term" value="C:axon"/>
    <property type="evidence" value="ECO:0000250"/>
    <property type="project" value="UniProtKB"/>
</dbReference>
<dbReference type="GO" id="GO:1904115">
    <property type="term" value="C:axon cytoplasm"/>
    <property type="evidence" value="ECO:0007669"/>
    <property type="project" value="GOC"/>
</dbReference>
<dbReference type="GO" id="GO:0005813">
    <property type="term" value="C:centrosome"/>
    <property type="evidence" value="ECO:0000266"/>
    <property type="project" value="RGD"/>
</dbReference>
<dbReference type="GO" id="GO:0005737">
    <property type="term" value="C:cytoplasm"/>
    <property type="evidence" value="ECO:0000266"/>
    <property type="project" value="RGD"/>
</dbReference>
<dbReference type="GO" id="GO:0031410">
    <property type="term" value="C:cytoplasmic vesicle"/>
    <property type="evidence" value="ECO:0000266"/>
    <property type="project" value="RGD"/>
</dbReference>
<dbReference type="GO" id="GO:0005783">
    <property type="term" value="C:endoplasmic reticulum"/>
    <property type="evidence" value="ECO:0000266"/>
    <property type="project" value="RGD"/>
</dbReference>
<dbReference type="GO" id="GO:0005768">
    <property type="term" value="C:endosome"/>
    <property type="evidence" value="ECO:0000266"/>
    <property type="project" value="RGD"/>
</dbReference>
<dbReference type="GO" id="GO:0005874">
    <property type="term" value="C:microtubule"/>
    <property type="evidence" value="ECO:0007669"/>
    <property type="project" value="UniProtKB-UniRule"/>
</dbReference>
<dbReference type="GO" id="GO:0015630">
    <property type="term" value="C:microtubule cytoskeleton"/>
    <property type="evidence" value="ECO:0000266"/>
    <property type="project" value="RGD"/>
</dbReference>
<dbReference type="GO" id="GO:0030496">
    <property type="term" value="C:midbody"/>
    <property type="evidence" value="ECO:0000266"/>
    <property type="project" value="RGD"/>
</dbReference>
<dbReference type="GO" id="GO:0031965">
    <property type="term" value="C:nuclear membrane"/>
    <property type="evidence" value="ECO:0000250"/>
    <property type="project" value="UniProtKB"/>
</dbReference>
<dbReference type="GO" id="GO:0005634">
    <property type="term" value="C:nucleus"/>
    <property type="evidence" value="ECO:0000250"/>
    <property type="project" value="UniProtKB"/>
</dbReference>
<dbReference type="GO" id="GO:0048471">
    <property type="term" value="C:perinuclear region of cytoplasm"/>
    <property type="evidence" value="ECO:0000266"/>
    <property type="project" value="RGD"/>
</dbReference>
<dbReference type="GO" id="GO:0000922">
    <property type="term" value="C:spindle pole"/>
    <property type="evidence" value="ECO:0000250"/>
    <property type="project" value="UniProtKB"/>
</dbReference>
<dbReference type="GO" id="GO:0043014">
    <property type="term" value="F:alpha-tubulin binding"/>
    <property type="evidence" value="ECO:0000250"/>
    <property type="project" value="UniProtKB"/>
</dbReference>
<dbReference type="GO" id="GO:0005524">
    <property type="term" value="F:ATP binding"/>
    <property type="evidence" value="ECO:0007669"/>
    <property type="project" value="UniProtKB-UniRule"/>
</dbReference>
<dbReference type="GO" id="GO:0016887">
    <property type="term" value="F:ATP hydrolysis activity"/>
    <property type="evidence" value="ECO:0000318"/>
    <property type="project" value="GO_Central"/>
</dbReference>
<dbReference type="GO" id="GO:0048487">
    <property type="term" value="F:beta-tubulin binding"/>
    <property type="evidence" value="ECO:0000250"/>
    <property type="project" value="UniProtKB"/>
</dbReference>
<dbReference type="GO" id="GO:0008017">
    <property type="term" value="F:microtubule binding"/>
    <property type="evidence" value="ECO:0000250"/>
    <property type="project" value="UniProtKB"/>
</dbReference>
<dbReference type="GO" id="GO:0008568">
    <property type="term" value="F:microtubule severing ATPase activity"/>
    <property type="evidence" value="ECO:0000250"/>
    <property type="project" value="UniProtKB"/>
</dbReference>
<dbReference type="GO" id="GO:0008089">
    <property type="term" value="P:anterograde axonal transport"/>
    <property type="evidence" value="ECO:0000250"/>
    <property type="project" value="UniProtKB"/>
</dbReference>
<dbReference type="GO" id="GO:0019896">
    <property type="term" value="P:axonal transport of mitochondrion"/>
    <property type="evidence" value="ECO:0000250"/>
    <property type="project" value="UniProtKB"/>
</dbReference>
<dbReference type="GO" id="GO:0007409">
    <property type="term" value="P:axonogenesis"/>
    <property type="evidence" value="ECO:0007669"/>
    <property type="project" value="UniProtKB-UniRule"/>
</dbReference>
<dbReference type="GO" id="GO:0032506">
    <property type="term" value="P:cytokinetic process"/>
    <property type="evidence" value="ECO:0000250"/>
    <property type="project" value="UniProtKB"/>
</dbReference>
<dbReference type="GO" id="GO:0006888">
    <property type="term" value="P:endoplasmic reticulum to Golgi vesicle-mediated transport"/>
    <property type="evidence" value="ECO:0000250"/>
    <property type="project" value="UniProtKB"/>
</dbReference>
<dbReference type="GO" id="GO:0010458">
    <property type="term" value="P:exit from mitosis"/>
    <property type="evidence" value="ECO:0000250"/>
    <property type="project" value="UniProtKB"/>
</dbReference>
<dbReference type="GO" id="GO:0090148">
    <property type="term" value="P:membrane fission"/>
    <property type="evidence" value="ECO:0000250"/>
    <property type="project" value="UniProtKB"/>
</dbReference>
<dbReference type="GO" id="GO:0001578">
    <property type="term" value="P:microtubule bundle formation"/>
    <property type="evidence" value="ECO:0000250"/>
    <property type="project" value="UniProtKB"/>
</dbReference>
<dbReference type="GO" id="GO:0051013">
    <property type="term" value="P:microtubule severing"/>
    <property type="evidence" value="ECO:0000250"/>
    <property type="project" value="UniProtKB"/>
</dbReference>
<dbReference type="GO" id="GO:0000281">
    <property type="term" value="P:mitotic cytokinesis"/>
    <property type="evidence" value="ECO:0000250"/>
    <property type="project" value="UniProtKB"/>
</dbReference>
<dbReference type="GO" id="GO:0051228">
    <property type="term" value="P:mitotic spindle disassembly"/>
    <property type="evidence" value="ECO:0000250"/>
    <property type="project" value="UniProtKB"/>
</dbReference>
<dbReference type="GO" id="GO:0031468">
    <property type="term" value="P:nuclear membrane reassembly"/>
    <property type="evidence" value="ECO:0000250"/>
    <property type="project" value="UniProtKB"/>
</dbReference>
<dbReference type="GO" id="GO:0032467">
    <property type="term" value="P:positive regulation of cytokinesis"/>
    <property type="evidence" value="ECO:0000266"/>
    <property type="project" value="RGD"/>
</dbReference>
<dbReference type="GO" id="GO:0031117">
    <property type="term" value="P:positive regulation of microtubule depolymerization"/>
    <property type="evidence" value="ECO:0007669"/>
    <property type="project" value="UniProtKB-UniRule"/>
</dbReference>
<dbReference type="GO" id="GO:0034214">
    <property type="term" value="P:protein hexamerization"/>
    <property type="evidence" value="ECO:0000250"/>
    <property type="project" value="UniProtKB"/>
</dbReference>
<dbReference type="GO" id="GO:0051260">
    <property type="term" value="P:protein homooligomerization"/>
    <property type="evidence" value="ECO:0000250"/>
    <property type="project" value="UniProtKB"/>
</dbReference>
<dbReference type="CDD" id="cd02679">
    <property type="entry name" value="MIT_spastin"/>
    <property type="match status" value="1"/>
</dbReference>
<dbReference type="CDD" id="cd19524">
    <property type="entry name" value="RecA-like_spastin"/>
    <property type="match status" value="1"/>
</dbReference>
<dbReference type="FunFam" id="3.40.50.300:FF:000093">
    <property type="entry name" value="Fidgetin-like 1"/>
    <property type="match status" value="1"/>
</dbReference>
<dbReference type="FunFam" id="1.10.8.60:FF:000036">
    <property type="entry name" value="Spastin"/>
    <property type="match status" value="1"/>
</dbReference>
<dbReference type="FunFam" id="1.20.58.80:FF:000006">
    <property type="entry name" value="Spastin"/>
    <property type="match status" value="1"/>
</dbReference>
<dbReference type="Gene3D" id="1.10.8.60">
    <property type="match status" value="1"/>
</dbReference>
<dbReference type="Gene3D" id="3.40.50.300">
    <property type="entry name" value="P-loop containing nucleotide triphosphate hydrolases"/>
    <property type="match status" value="1"/>
</dbReference>
<dbReference type="Gene3D" id="1.20.58.80">
    <property type="entry name" value="Phosphotransferase system, lactose/cellobiose-type IIA subunit"/>
    <property type="match status" value="1"/>
</dbReference>
<dbReference type="HAMAP" id="MF_03021">
    <property type="entry name" value="Spastin"/>
    <property type="match status" value="1"/>
</dbReference>
<dbReference type="InterPro" id="IPR003593">
    <property type="entry name" value="AAA+_ATPase"/>
</dbReference>
<dbReference type="InterPro" id="IPR041569">
    <property type="entry name" value="AAA_lid_3"/>
</dbReference>
<dbReference type="InterPro" id="IPR003959">
    <property type="entry name" value="ATPase_AAA_core"/>
</dbReference>
<dbReference type="InterPro" id="IPR003960">
    <property type="entry name" value="ATPase_AAA_CS"/>
</dbReference>
<dbReference type="InterPro" id="IPR007330">
    <property type="entry name" value="MIT_dom"/>
</dbReference>
<dbReference type="InterPro" id="IPR050304">
    <property type="entry name" value="MT-severing_AAA_ATPase"/>
</dbReference>
<dbReference type="InterPro" id="IPR027417">
    <property type="entry name" value="P-loop_NTPase"/>
</dbReference>
<dbReference type="InterPro" id="IPR015415">
    <property type="entry name" value="Spast_Vps4_C"/>
</dbReference>
<dbReference type="InterPro" id="IPR017179">
    <property type="entry name" value="Spastin"/>
</dbReference>
<dbReference type="InterPro" id="IPR035106">
    <property type="entry name" value="Spastin_chordate"/>
</dbReference>
<dbReference type="PANTHER" id="PTHR23074">
    <property type="entry name" value="AAA DOMAIN-CONTAINING"/>
    <property type="match status" value="1"/>
</dbReference>
<dbReference type="PANTHER" id="PTHR23074:SF86">
    <property type="entry name" value="SPASTIN"/>
    <property type="match status" value="1"/>
</dbReference>
<dbReference type="Pfam" id="PF00004">
    <property type="entry name" value="AAA"/>
    <property type="match status" value="1"/>
</dbReference>
<dbReference type="Pfam" id="PF17862">
    <property type="entry name" value="AAA_lid_3"/>
    <property type="match status" value="1"/>
</dbReference>
<dbReference type="Pfam" id="PF09336">
    <property type="entry name" value="Vps4_C"/>
    <property type="match status" value="1"/>
</dbReference>
<dbReference type="PIRSF" id="PIRSF037338">
    <property type="entry name" value="Spastin"/>
    <property type="match status" value="1"/>
</dbReference>
<dbReference type="SMART" id="SM00382">
    <property type="entry name" value="AAA"/>
    <property type="match status" value="1"/>
</dbReference>
<dbReference type="SMART" id="SM00745">
    <property type="entry name" value="MIT"/>
    <property type="match status" value="1"/>
</dbReference>
<dbReference type="SUPFAM" id="SSF52540">
    <property type="entry name" value="P-loop containing nucleoside triphosphate hydrolases"/>
    <property type="match status" value="1"/>
</dbReference>
<dbReference type="PROSITE" id="PS00674">
    <property type="entry name" value="AAA"/>
    <property type="match status" value="1"/>
</dbReference>
<name>SPAST_RAT</name>
<sequence>MSSPAGRRKKKGSGGASPAPARPPPPAAVPAPAAGPAPAPGSPHKRNLYYFSYPLVVGFALLRLLACHLGLLFVWLCQRFSRALMAAKRSSGTAPAPASPSTPAPGPGGEAESVRVFHKQAFEYISIALRIDEEEKGQKEQAVEWYKKGIEELEKGIAVIVTGQGEQYERARRLQAKMMTNLVMAKDRLQLLESGAVPKKKDPLTHASNSLPRSKTVMKSGSTGLSGHHRAPSCSGLSMVSGARPGSGPAATTHKGTSKPNRTNKPSTPTTAVRKKKDLKNFRNVDSNLANLIMNEIVDNGTAVKFDDIAGQELAKQALQEIVILPSLRPELFTGLRAPARGLLLFGPPGNGKTMLAKAVAAESNATFFNISAASLTSKYVGEGEKLVRALFAVARELQPSIIFIDEVDSLLCERREGEHDASRRLKTEFLIEFDGVQSAGDDRVLVMGATNRPQELDEAVLRRFIKRVYVSLPNEETRLLLLKNLLCKQGSPLTQKELAQLARMTDGYSGSDLTALAKDAALGPIRELKPEQVKNMSASEMRNIRLSDFTESLKKIKRSVSPQTLEAYIRWNKDFGDTTV</sequence>
<evidence type="ECO:0000250" key="1">
    <source>
        <dbReference type="UniProtKB" id="Q9UBP0"/>
    </source>
</evidence>
<evidence type="ECO:0000255" key="2"/>
<evidence type="ECO:0000255" key="3">
    <source>
        <dbReference type="HAMAP-Rule" id="MF_03021"/>
    </source>
</evidence>
<evidence type="ECO:0000256" key="4">
    <source>
        <dbReference type="SAM" id="MobiDB-lite"/>
    </source>
</evidence>
<evidence type="ECO:0000269" key="5">
    <source>
    </source>
</evidence>
<evidence type="ECO:0007744" key="6">
    <source>
    </source>
</evidence>
<gene>
    <name evidence="3" type="primary">Spast</name>
    <name type="synonym">Spg4</name>
</gene>
<proteinExistence type="evidence at protein level"/>
<organism>
    <name type="scientific">Rattus norvegicus</name>
    <name type="common">Rat</name>
    <dbReference type="NCBI Taxonomy" id="10116"/>
    <lineage>
        <taxon>Eukaryota</taxon>
        <taxon>Metazoa</taxon>
        <taxon>Chordata</taxon>
        <taxon>Craniata</taxon>
        <taxon>Vertebrata</taxon>
        <taxon>Euteleostomi</taxon>
        <taxon>Mammalia</taxon>
        <taxon>Eutheria</taxon>
        <taxon>Euarchontoglires</taxon>
        <taxon>Glires</taxon>
        <taxon>Rodentia</taxon>
        <taxon>Myomorpha</taxon>
        <taxon>Muroidea</taxon>
        <taxon>Muridae</taxon>
        <taxon>Murinae</taxon>
        <taxon>Rattus</taxon>
    </lineage>
</organism>
<reference key="1">
    <citation type="journal article" date="2004" name="Genome Res.">
        <title>The status, quality, and expansion of the NIH full-length cDNA project: the Mammalian Gene Collection (MGC).</title>
        <authorList>
            <consortium name="The MGC Project Team"/>
        </authorList>
    </citation>
    <scope>NUCLEOTIDE SEQUENCE [LARGE SCALE MRNA]</scope>
    <source>
        <tissue>Lung</tissue>
    </source>
</reference>
<reference key="2">
    <citation type="journal article" date="2008" name="Mol. Biol. Cell">
        <title>The microtubule-severing proteins spastin and katanin participate differently in the formation of axonal branches.</title>
        <authorList>
            <person name="Yu W."/>
            <person name="Qiang L."/>
            <person name="Solowska J.M."/>
            <person name="Karabay A."/>
            <person name="Korulu S."/>
            <person name="Baas P.W."/>
        </authorList>
    </citation>
    <scope>FUNCTION</scope>
</reference>
<reference key="3">
    <citation type="journal article" date="2012" name="Nat. Commun.">
        <title>Quantitative maps of protein phosphorylation sites across 14 different rat organs and tissues.</title>
        <authorList>
            <person name="Lundby A."/>
            <person name="Secher A."/>
            <person name="Lage K."/>
            <person name="Nordsborg N.B."/>
            <person name="Dmytriyev A."/>
            <person name="Lundby C."/>
            <person name="Olsen J.V."/>
        </authorList>
    </citation>
    <scope>PHOSPHORYLATION [LARGE SCALE ANALYSIS] AT SER-210</scope>
    <scope>IDENTIFICATION BY MASS SPECTROMETRY [LARGE SCALE ANALYSIS]</scope>
</reference>